<keyword id="KW-0648">Protein biosynthesis</keyword>
<keyword id="KW-0808">Transferase</keyword>
<name>FMT_WOLWR</name>
<feature type="chain" id="PRO_1000190052" description="Methionyl-tRNA formyltransferase">
    <location>
        <begin position="1"/>
        <end position="299"/>
    </location>
</feature>
<feature type="binding site" evidence="1">
    <location>
        <begin position="109"/>
        <end position="112"/>
    </location>
    <ligand>
        <name>(6S)-5,6,7,8-tetrahydrofolate</name>
        <dbReference type="ChEBI" id="CHEBI:57453"/>
    </ligand>
</feature>
<gene>
    <name evidence="1" type="primary">fmt</name>
    <name type="ordered locus">WRi_008300</name>
</gene>
<organism>
    <name type="scientific">Wolbachia sp. subsp. Drosophila simulans (strain wRi)</name>
    <dbReference type="NCBI Taxonomy" id="66084"/>
    <lineage>
        <taxon>Bacteria</taxon>
        <taxon>Pseudomonadati</taxon>
        <taxon>Pseudomonadota</taxon>
        <taxon>Alphaproteobacteria</taxon>
        <taxon>Rickettsiales</taxon>
        <taxon>Anaplasmataceae</taxon>
        <taxon>Wolbachieae</taxon>
        <taxon>Wolbachia</taxon>
    </lineage>
</organism>
<comment type="function">
    <text evidence="1">Attaches a formyl group to the free amino group of methionyl-tRNA(fMet). The formyl group appears to play a dual role in the initiator identity of N-formylmethionyl-tRNA by promoting its recognition by IF2 and preventing the misappropriation of this tRNA by the elongation apparatus.</text>
</comment>
<comment type="catalytic activity">
    <reaction evidence="1">
        <text>L-methionyl-tRNA(fMet) + (6R)-10-formyltetrahydrofolate = N-formyl-L-methionyl-tRNA(fMet) + (6S)-5,6,7,8-tetrahydrofolate + H(+)</text>
        <dbReference type="Rhea" id="RHEA:24380"/>
        <dbReference type="Rhea" id="RHEA-COMP:9952"/>
        <dbReference type="Rhea" id="RHEA-COMP:9953"/>
        <dbReference type="ChEBI" id="CHEBI:15378"/>
        <dbReference type="ChEBI" id="CHEBI:57453"/>
        <dbReference type="ChEBI" id="CHEBI:78530"/>
        <dbReference type="ChEBI" id="CHEBI:78844"/>
        <dbReference type="ChEBI" id="CHEBI:195366"/>
        <dbReference type="EC" id="2.1.2.9"/>
    </reaction>
</comment>
<comment type="similarity">
    <text evidence="1">Belongs to the Fmt family.</text>
</comment>
<sequence>MRIIFMGSPGFAVNSLSLLLKSKSEVVAVYTKAPKPSGRGQKPMKSPVHVIAEESNIEVCTPISLKFSAEQEKFRNFKPDVAVVAAYGLILPREILNIPKYGCINIHPSLLPRWRGAAPIQHTILAGDQETGVSIMQLDEGLDSGPILKQEKFLIEKNDNYKTLHDKLSKLGSDLLLKVLNEIEKQLPLKQNDNDACYADKVEDYKIYASDACEVAYRKVKAFYPKAFIKIENKRIRILDADFEALASEQGKIVNDNMHISLKGGTLIPKVVQMEGRNPCSIEDFIRGLKSSMVKKFIE</sequence>
<proteinExistence type="inferred from homology"/>
<protein>
    <recommendedName>
        <fullName evidence="1">Methionyl-tRNA formyltransferase</fullName>
        <ecNumber evidence="1">2.1.2.9</ecNumber>
    </recommendedName>
</protein>
<evidence type="ECO:0000255" key="1">
    <source>
        <dbReference type="HAMAP-Rule" id="MF_00182"/>
    </source>
</evidence>
<accession>C0R3S7</accession>
<dbReference type="EC" id="2.1.2.9" evidence="1"/>
<dbReference type="EMBL" id="CP001391">
    <property type="protein sequence ID" value="ACN95569.1"/>
    <property type="molecule type" value="Genomic_DNA"/>
</dbReference>
<dbReference type="RefSeq" id="WP_012673287.1">
    <property type="nucleotide sequence ID" value="NZ_MKIF01000050.1"/>
</dbReference>
<dbReference type="SMR" id="C0R3S7"/>
<dbReference type="STRING" id="66084.WRi_008300"/>
<dbReference type="KEGG" id="wri:WRi_008300"/>
<dbReference type="HOGENOM" id="CLU_033347_1_1_5"/>
<dbReference type="Proteomes" id="UP000001293">
    <property type="component" value="Chromosome"/>
</dbReference>
<dbReference type="GO" id="GO:0005829">
    <property type="term" value="C:cytosol"/>
    <property type="evidence" value="ECO:0007669"/>
    <property type="project" value="TreeGrafter"/>
</dbReference>
<dbReference type="GO" id="GO:0004479">
    <property type="term" value="F:methionyl-tRNA formyltransferase activity"/>
    <property type="evidence" value="ECO:0007669"/>
    <property type="project" value="UniProtKB-UniRule"/>
</dbReference>
<dbReference type="CDD" id="cd08646">
    <property type="entry name" value="FMT_core_Met-tRNA-FMT_N"/>
    <property type="match status" value="1"/>
</dbReference>
<dbReference type="Gene3D" id="3.40.50.12230">
    <property type="match status" value="1"/>
</dbReference>
<dbReference type="HAMAP" id="MF_00182">
    <property type="entry name" value="Formyl_trans"/>
    <property type="match status" value="1"/>
</dbReference>
<dbReference type="InterPro" id="IPR005794">
    <property type="entry name" value="Fmt"/>
</dbReference>
<dbReference type="InterPro" id="IPR005793">
    <property type="entry name" value="Formyl_trans_C"/>
</dbReference>
<dbReference type="InterPro" id="IPR002376">
    <property type="entry name" value="Formyl_transf_N"/>
</dbReference>
<dbReference type="InterPro" id="IPR036477">
    <property type="entry name" value="Formyl_transf_N_sf"/>
</dbReference>
<dbReference type="InterPro" id="IPR011034">
    <property type="entry name" value="Formyl_transferase-like_C_sf"/>
</dbReference>
<dbReference type="InterPro" id="IPR041711">
    <property type="entry name" value="Met-tRNA-FMT_N"/>
</dbReference>
<dbReference type="NCBIfam" id="TIGR00460">
    <property type="entry name" value="fmt"/>
    <property type="match status" value="1"/>
</dbReference>
<dbReference type="PANTHER" id="PTHR11138">
    <property type="entry name" value="METHIONYL-TRNA FORMYLTRANSFERASE"/>
    <property type="match status" value="1"/>
</dbReference>
<dbReference type="PANTHER" id="PTHR11138:SF5">
    <property type="entry name" value="METHIONYL-TRNA FORMYLTRANSFERASE, MITOCHONDRIAL"/>
    <property type="match status" value="1"/>
</dbReference>
<dbReference type="Pfam" id="PF02911">
    <property type="entry name" value="Formyl_trans_C"/>
    <property type="match status" value="1"/>
</dbReference>
<dbReference type="Pfam" id="PF00551">
    <property type="entry name" value="Formyl_trans_N"/>
    <property type="match status" value="1"/>
</dbReference>
<dbReference type="SUPFAM" id="SSF50486">
    <property type="entry name" value="FMT C-terminal domain-like"/>
    <property type="match status" value="1"/>
</dbReference>
<dbReference type="SUPFAM" id="SSF53328">
    <property type="entry name" value="Formyltransferase"/>
    <property type="match status" value="1"/>
</dbReference>
<reference key="1">
    <citation type="journal article" date="2009" name="Proc. Natl. Acad. Sci. U.S.A.">
        <title>The mosaic genome structure of the Wolbachia wRi strain infecting Drosophila simulans.</title>
        <authorList>
            <person name="Klasson L."/>
            <person name="Westberg J."/>
            <person name="Sapountzis P."/>
            <person name="Naeslund K."/>
            <person name="Lutnaes Y."/>
            <person name="Darby A.C."/>
            <person name="Veneti Z."/>
            <person name="Chen L."/>
            <person name="Braig H.R."/>
            <person name="Garrett R."/>
            <person name="Bourtzis K."/>
            <person name="Andersson S.G."/>
        </authorList>
    </citation>
    <scope>NUCLEOTIDE SEQUENCE [LARGE SCALE GENOMIC DNA]</scope>
    <source>
        <strain>wRi</strain>
    </source>
</reference>